<evidence type="ECO:0000255" key="1">
    <source>
        <dbReference type="HAMAP-Rule" id="MF_01039"/>
    </source>
</evidence>
<keyword id="KW-0312">Gluconeogenesis</keyword>
<keyword id="KW-0324">Glycolysis</keyword>
<keyword id="KW-0413">Isomerase</keyword>
<keyword id="KW-1185">Reference proteome</keyword>
<dbReference type="EC" id="5.4.2.11" evidence="1"/>
<dbReference type="EMBL" id="AM942759">
    <property type="protein sequence ID" value="CAR41412.1"/>
    <property type="molecule type" value="Genomic_DNA"/>
</dbReference>
<dbReference type="RefSeq" id="WP_004244443.1">
    <property type="nucleotide sequence ID" value="NC_010554.1"/>
</dbReference>
<dbReference type="SMR" id="B4EST0"/>
<dbReference type="EnsemblBacteria" id="CAR41412">
    <property type="protein sequence ID" value="CAR41412"/>
    <property type="gene ID" value="PMI0590"/>
</dbReference>
<dbReference type="GeneID" id="6802456"/>
<dbReference type="KEGG" id="pmr:PMI0590"/>
<dbReference type="eggNOG" id="COG0588">
    <property type="taxonomic scope" value="Bacteria"/>
</dbReference>
<dbReference type="HOGENOM" id="CLU_033323_1_1_6"/>
<dbReference type="UniPathway" id="UPA00109">
    <property type="reaction ID" value="UER00186"/>
</dbReference>
<dbReference type="Proteomes" id="UP000008319">
    <property type="component" value="Chromosome"/>
</dbReference>
<dbReference type="GO" id="GO:0004619">
    <property type="term" value="F:phosphoglycerate mutase activity"/>
    <property type="evidence" value="ECO:0007669"/>
    <property type="project" value="UniProtKB-EC"/>
</dbReference>
<dbReference type="GO" id="GO:0006094">
    <property type="term" value="P:gluconeogenesis"/>
    <property type="evidence" value="ECO:0007669"/>
    <property type="project" value="UniProtKB-UniRule"/>
</dbReference>
<dbReference type="GO" id="GO:0006096">
    <property type="term" value="P:glycolytic process"/>
    <property type="evidence" value="ECO:0007669"/>
    <property type="project" value="UniProtKB-UniRule"/>
</dbReference>
<dbReference type="CDD" id="cd07067">
    <property type="entry name" value="HP_PGM_like"/>
    <property type="match status" value="1"/>
</dbReference>
<dbReference type="FunFam" id="3.40.50.1240:FF:000003">
    <property type="entry name" value="2,3-bisphosphoglycerate-dependent phosphoglycerate mutase"/>
    <property type="match status" value="1"/>
</dbReference>
<dbReference type="Gene3D" id="3.40.50.1240">
    <property type="entry name" value="Phosphoglycerate mutase-like"/>
    <property type="match status" value="1"/>
</dbReference>
<dbReference type="HAMAP" id="MF_01039">
    <property type="entry name" value="PGAM_GpmA"/>
    <property type="match status" value="1"/>
</dbReference>
<dbReference type="InterPro" id="IPR013078">
    <property type="entry name" value="His_Pase_superF_clade-1"/>
</dbReference>
<dbReference type="InterPro" id="IPR029033">
    <property type="entry name" value="His_PPase_superfam"/>
</dbReference>
<dbReference type="InterPro" id="IPR001345">
    <property type="entry name" value="PG/BPGM_mutase_AS"/>
</dbReference>
<dbReference type="InterPro" id="IPR005952">
    <property type="entry name" value="Phosphogly_mut1"/>
</dbReference>
<dbReference type="NCBIfam" id="TIGR01258">
    <property type="entry name" value="pgm_1"/>
    <property type="match status" value="1"/>
</dbReference>
<dbReference type="NCBIfam" id="NF010713">
    <property type="entry name" value="PRK14115.1"/>
    <property type="match status" value="1"/>
</dbReference>
<dbReference type="PANTHER" id="PTHR11931">
    <property type="entry name" value="PHOSPHOGLYCERATE MUTASE"/>
    <property type="match status" value="1"/>
</dbReference>
<dbReference type="Pfam" id="PF00300">
    <property type="entry name" value="His_Phos_1"/>
    <property type="match status" value="2"/>
</dbReference>
<dbReference type="PIRSF" id="PIRSF000709">
    <property type="entry name" value="6PFK_2-Ptase"/>
    <property type="match status" value="1"/>
</dbReference>
<dbReference type="SMART" id="SM00855">
    <property type="entry name" value="PGAM"/>
    <property type="match status" value="1"/>
</dbReference>
<dbReference type="SUPFAM" id="SSF53254">
    <property type="entry name" value="Phosphoglycerate mutase-like"/>
    <property type="match status" value="1"/>
</dbReference>
<dbReference type="PROSITE" id="PS00175">
    <property type="entry name" value="PG_MUTASE"/>
    <property type="match status" value="1"/>
</dbReference>
<gene>
    <name evidence="1" type="primary">gpmA</name>
    <name type="ordered locus">PMI0590</name>
</gene>
<sequence>MAVTKLVLVRHGESVWNKENRFTGWTDVELSDKGRNEAQEAGKLLKAEGFTFDYAYTSVLKRAIHTLWNILDEVDQQWLPVEKSWKLNERHYGALQGLNKAETAEKYGDEQVKQWRRGFAVTPPELTKDDDRFPGKDPRYASLTEAELPLTESLALTIDRVTPYWEEVIKPRVASGDKVIIAAHGNSLRALVKYLDNMSEEEILELNIPTAVPLVYEFDENMKPIKRYYLGNAEEIAAKAAAVANQGKAK</sequence>
<reference key="1">
    <citation type="journal article" date="2008" name="J. Bacteriol.">
        <title>Complete genome sequence of uropathogenic Proteus mirabilis, a master of both adherence and motility.</title>
        <authorList>
            <person name="Pearson M.M."/>
            <person name="Sebaihia M."/>
            <person name="Churcher C."/>
            <person name="Quail M.A."/>
            <person name="Seshasayee A.S."/>
            <person name="Luscombe N.M."/>
            <person name="Abdellah Z."/>
            <person name="Arrosmith C."/>
            <person name="Atkin B."/>
            <person name="Chillingworth T."/>
            <person name="Hauser H."/>
            <person name="Jagels K."/>
            <person name="Moule S."/>
            <person name="Mungall K."/>
            <person name="Norbertczak H."/>
            <person name="Rabbinowitsch E."/>
            <person name="Walker D."/>
            <person name="Whithead S."/>
            <person name="Thomson N.R."/>
            <person name="Rather P.N."/>
            <person name="Parkhill J."/>
            <person name="Mobley H.L.T."/>
        </authorList>
    </citation>
    <scope>NUCLEOTIDE SEQUENCE [LARGE SCALE GENOMIC DNA]</scope>
    <source>
        <strain>HI4320</strain>
    </source>
</reference>
<name>GPMA_PROMH</name>
<organism>
    <name type="scientific">Proteus mirabilis (strain HI4320)</name>
    <dbReference type="NCBI Taxonomy" id="529507"/>
    <lineage>
        <taxon>Bacteria</taxon>
        <taxon>Pseudomonadati</taxon>
        <taxon>Pseudomonadota</taxon>
        <taxon>Gammaproteobacteria</taxon>
        <taxon>Enterobacterales</taxon>
        <taxon>Morganellaceae</taxon>
        <taxon>Proteus</taxon>
    </lineage>
</organism>
<feature type="chain" id="PRO_1000135966" description="2,3-bisphosphoglycerate-dependent phosphoglycerate mutase">
    <location>
        <begin position="1"/>
        <end position="250"/>
    </location>
</feature>
<feature type="active site" description="Tele-phosphohistidine intermediate" evidence="1">
    <location>
        <position position="11"/>
    </location>
</feature>
<feature type="active site" description="Proton donor/acceptor" evidence="1">
    <location>
        <position position="89"/>
    </location>
</feature>
<feature type="binding site" evidence="1">
    <location>
        <begin position="10"/>
        <end position="17"/>
    </location>
    <ligand>
        <name>substrate</name>
    </ligand>
</feature>
<feature type="binding site" evidence="1">
    <location>
        <begin position="23"/>
        <end position="24"/>
    </location>
    <ligand>
        <name>substrate</name>
    </ligand>
</feature>
<feature type="binding site" evidence="1">
    <location>
        <position position="62"/>
    </location>
    <ligand>
        <name>substrate</name>
    </ligand>
</feature>
<feature type="binding site" evidence="1">
    <location>
        <begin position="89"/>
        <end position="92"/>
    </location>
    <ligand>
        <name>substrate</name>
    </ligand>
</feature>
<feature type="binding site" evidence="1">
    <location>
        <position position="100"/>
    </location>
    <ligand>
        <name>substrate</name>
    </ligand>
</feature>
<feature type="binding site" evidence="1">
    <location>
        <begin position="116"/>
        <end position="117"/>
    </location>
    <ligand>
        <name>substrate</name>
    </ligand>
</feature>
<feature type="binding site" evidence="1">
    <location>
        <begin position="185"/>
        <end position="186"/>
    </location>
    <ligand>
        <name>substrate</name>
    </ligand>
</feature>
<feature type="site" description="Transition state stabilizer" evidence="1">
    <location>
        <position position="184"/>
    </location>
</feature>
<proteinExistence type="inferred from homology"/>
<comment type="function">
    <text evidence="1">Catalyzes the interconversion of 2-phosphoglycerate and 3-phosphoglycerate.</text>
</comment>
<comment type="catalytic activity">
    <reaction evidence="1">
        <text>(2R)-2-phosphoglycerate = (2R)-3-phosphoglycerate</text>
        <dbReference type="Rhea" id="RHEA:15901"/>
        <dbReference type="ChEBI" id="CHEBI:58272"/>
        <dbReference type="ChEBI" id="CHEBI:58289"/>
        <dbReference type="EC" id="5.4.2.11"/>
    </reaction>
</comment>
<comment type="pathway">
    <text evidence="1">Carbohydrate degradation; glycolysis; pyruvate from D-glyceraldehyde 3-phosphate: step 3/5.</text>
</comment>
<comment type="subunit">
    <text evidence="1">Homodimer.</text>
</comment>
<comment type="similarity">
    <text evidence="1">Belongs to the phosphoglycerate mutase family. BPG-dependent PGAM subfamily.</text>
</comment>
<accession>B4EST0</accession>
<protein>
    <recommendedName>
        <fullName evidence="1">2,3-bisphosphoglycerate-dependent phosphoglycerate mutase</fullName>
        <shortName evidence="1">BPG-dependent PGAM</shortName>
        <shortName evidence="1">PGAM</shortName>
        <shortName evidence="1">Phosphoglyceromutase</shortName>
        <shortName evidence="1">dPGM</shortName>
        <ecNumber evidence="1">5.4.2.11</ecNumber>
    </recommendedName>
</protein>